<gene>
    <name type="primary">Ahsp</name>
    <name type="synonym">Edrf</name>
    <name type="synonym">Eraf</name>
</gene>
<protein>
    <recommendedName>
        <fullName>Alpha-hemoglobin-stabilizing protein</fullName>
    </recommendedName>
    <alternativeName>
        <fullName>Erythroid differentiation-related factor</fullName>
    </alternativeName>
    <alternativeName>
        <fullName>Erythroid-associated factor</fullName>
    </alternativeName>
</protein>
<reference key="1">
    <citation type="journal article" date="2001" name="Nat. Med.">
        <title>A novel erythroid-specific marker of transmissible spongiform encephalopathies.</title>
        <authorList>
            <person name="Miele G."/>
            <person name="Manson J."/>
            <person name="Clinton M."/>
        </authorList>
    </citation>
    <scope>NUCLEOTIDE SEQUENCE [MRNA]</scope>
    <scope>TISSUE SPECIFICITY</scope>
    <source>
        <strain>C57BL/6J</strain>
    </source>
</reference>
<reference key="2">
    <citation type="journal article" date="1999" name="Zhongguo Yi Xue Ke Xue Yuan Xue Bao">
        <title>Subtractive cDNA cloning and analysis of murine erythroid terminal differentiation related factor.</title>
        <authorList>
            <person name="Liu S.G."/>
            <person name="Zhang Z.Y."/>
            <person name="Ma J."/>
            <person name="Zhang J.B."/>
            <person name="Xue S.P."/>
        </authorList>
    </citation>
    <scope>NUCLEOTIDE SEQUENCE [MRNA]</scope>
    <source>
        <strain>BALB/cJ</strain>
        <tissue>Erythroblast</tissue>
    </source>
</reference>
<reference key="3">
    <citation type="submission" date="2002-02" db="EMBL/GenBank/DDBJ databases">
        <authorList>
            <person name="Miele G."/>
            <person name="Manson J."/>
            <person name="Clinton M."/>
        </authorList>
    </citation>
    <scope>NUCLEOTIDE SEQUENCE [GENOMIC DNA]</scope>
    <source>
        <strain>129/Sv</strain>
    </source>
</reference>
<reference key="4">
    <citation type="journal article" date="2005" name="Science">
        <title>The transcriptional landscape of the mammalian genome.</title>
        <authorList>
            <person name="Carninci P."/>
            <person name="Kasukawa T."/>
            <person name="Katayama S."/>
            <person name="Gough J."/>
            <person name="Frith M.C."/>
            <person name="Maeda N."/>
            <person name="Oyama R."/>
            <person name="Ravasi T."/>
            <person name="Lenhard B."/>
            <person name="Wells C."/>
            <person name="Kodzius R."/>
            <person name="Shimokawa K."/>
            <person name="Bajic V.B."/>
            <person name="Brenner S.E."/>
            <person name="Batalov S."/>
            <person name="Forrest A.R."/>
            <person name="Zavolan M."/>
            <person name="Davis M.J."/>
            <person name="Wilming L.G."/>
            <person name="Aidinis V."/>
            <person name="Allen J.E."/>
            <person name="Ambesi-Impiombato A."/>
            <person name="Apweiler R."/>
            <person name="Aturaliya R.N."/>
            <person name="Bailey T.L."/>
            <person name="Bansal M."/>
            <person name="Baxter L."/>
            <person name="Beisel K.W."/>
            <person name="Bersano T."/>
            <person name="Bono H."/>
            <person name="Chalk A.M."/>
            <person name="Chiu K.P."/>
            <person name="Choudhary V."/>
            <person name="Christoffels A."/>
            <person name="Clutterbuck D.R."/>
            <person name="Crowe M.L."/>
            <person name="Dalla E."/>
            <person name="Dalrymple B.P."/>
            <person name="de Bono B."/>
            <person name="Della Gatta G."/>
            <person name="di Bernardo D."/>
            <person name="Down T."/>
            <person name="Engstrom P."/>
            <person name="Fagiolini M."/>
            <person name="Faulkner G."/>
            <person name="Fletcher C.F."/>
            <person name="Fukushima T."/>
            <person name="Furuno M."/>
            <person name="Futaki S."/>
            <person name="Gariboldi M."/>
            <person name="Georgii-Hemming P."/>
            <person name="Gingeras T.R."/>
            <person name="Gojobori T."/>
            <person name="Green R.E."/>
            <person name="Gustincich S."/>
            <person name="Harbers M."/>
            <person name="Hayashi Y."/>
            <person name="Hensch T.K."/>
            <person name="Hirokawa N."/>
            <person name="Hill D."/>
            <person name="Huminiecki L."/>
            <person name="Iacono M."/>
            <person name="Ikeo K."/>
            <person name="Iwama A."/>
            <person name="Ishikawa T."/>
            <person name="Jakt M."/>
            <person name="Kanapin A."/>
            <person name="Katoh M."/>
            <person name="Kawasawa Y."/>
            <person name="Kelso J."/>
            <person name="Kitamura H."/>
            <person name="Kitano H."/>
            <person name="Kollias G."/>
            <person name="Krishnan S.P."/>
            <person name="Kruger A."/>
            <person name="Kummerfeld S.K."/>
            <person name="Kurochkin I.V."/>
            <person name="Lareau L.F."/>
            <person name="Lazarevic D."/>
            <person name="Lipovich L."/>
            <person name="Liu J."/>
            <person name="Liuni S."/>
            <person name="McWilliam S."/>
            <person name="Madan Babu M."/>
            <person name="Madera M."/>
            <person name="Marchionni L."/>
            <person name="Matsuda H."/>
            <person name="Matsuzawa S."/>
            <person name="Miki H."/>
            <person name="Mignone F."/>
            <person name="Miyake S."/>
            <person name="Morris K."/>
            <person name="Mottagui-Tabar S."/>
            <person name="Mulder N."/>
            <person name="Nakano N."/>
            <person name="Nakauchi H."/>
            <person name="Ng P."/>
            <person name="Nilsson R."/>
            <person name="Nishiguchi S."/>
            <person name="Nishikawa S."/>
            <person name="Nori F."/>
            <person name="Ohara O."/>
            <person name="Okazaki Y."/>
            <person name="Orlando V."/>
            <person name="Pang K.C."/>
            <person name="Pavan W.J."/>
            <person name="Pavesi G."/>
            <person name="Pesole G."/>
            <person name="Petrovsky N."/>
            <person name="Piazza S."/>
            <person name="Reed J."/>
            <person name="Reid J.F."/>
            <person name="Ring B.Z."/>
            <person name="Ringwald M."/>
            <person name="Rost B."/>
            <person name="Ruan Y."/>
            <person name="Salzberg S.L."/>
            <person name="Sandelin A."/>
            <person name="Schneider C."/>
            <person name="Schoenbach C."/>
            <person name="Sekiguchi K."/>
            <person name="Semple C.A."/>
            <person name="Seno S."/>
            <person name="Sessa L."/>
            <person name="Sheng Y."/>
            <person name="Shibata Y."/>
            <person name="Shimada H."/>
            <person name="Shimada K."/>
            <person name="Silva D."/>
            <person name="Sinclair B."/>
            <person name="Sperling S."/>
            <person name="Stupka E."/>
            <person name="Sugiura K."/>
            <person name="Sultana R."/>
            <person name="Takenaka Y."/>
            <person name="Taki K."/>
            <person name="Tammoja K."/>
            <person name="Tan S.L."/>
            <person name="Tang S."/>
            <person name="Taylor M.S."/>
            <person name="Tegner J."/>
            <person name="Teichmann S.A."/>
            <person name="Ueda H.R."/>
            <person name="van Nimwegen E."/>
            <person name="Verardo R."/>
            <person name="Wei C.L."/>
            <person name="Yagi K."/>
            <person name="Yamanishi H."/>
            <person name="Zabarovsky E."/>
            <person name="Zhu S."/>
            <person name="Zimmer A."/>
            <person name="Hide W."/>
            <person name="Bult C."/>
            <person name="Grimmond S.M."/>
            <person name="Teasdale R.D."/>
            <person name="Liu E.T."/>
            <person name="Brusic V."/>
            <person name="Quackenbush J."/>
            <person name="Wahlestedt C."/>
            <person name="Mattick J.S."/>
            <person name="Hume D.A."/>
            <person name="Kai C."/>
            <person name="Sasaki D."/>
            <person name="Tomaru Y."/>
            <person name="Fukuda S."/>
            <person name="Kanamori-Katayama M."/>
            <person name="Suzuki M."/>
            <person name="Aoki J."/>
            <person name="Arakawa T."/>
            <person name="Iida J."/>
            <person name="Imamura K."/>
            <person name="Itoh M."/>
            <person name="Kato T."/>
            <person name="Kawaji H."/>
            <person name="Kawagashira N."/>
            <person name="Kawashima T."/>
            <person name="Kojima M."/>
            <person name="Kondo S."/>
            <person name="Konno H."/>
            <person name="Nakano K."/>
            <person name="Ninomiya N."/>
            <person name="Nishio T."/>
            <person name="Okada M."/>
            <person name="Plessy C."/>
            <person name="Shibata K."/>
            <person name="Shiraki T."/>
            <person name="Suzuki S."/>
            <person name="Tagami M."/>
            <person name="Waki K."/>
            <person name="Watahiki A."/>
            <person name="Okamura-Oho Y."/>
            <person name="Suzuki H."/>
            <person name="Kawai J."/>
            <person name="Hayashizaki Y."/>
        </authorList>
    </citation>
    <scope>NUCLEOTIDE SEQUENCE [LARGE SCALE MRNA]</scope>
    <source>
        <strain>C57BL/6J</strain>
        <tissue>Embryonic liver</tissue>
    </source>
</reference>
<reference key="5">
    <citation type="journal article" date="2002" name="Nature">
        <title>An abundant erythroid protein that stabilizes free alpha-haemoglobin.</title>
        <authorList>
            <person name="Kihm A.J."/>
            <person name="Kong Y."/>
            <person name="Hong W."/>
            <person name="Russell J.E."/>
            <person name="Rouda S."/>
            <person name="Adachi K."/>
            <person name="Simon M.C."/>
            <person name="Blobel G.A."/>
            <person name="Weiss M.J."/>
        </authorList>
    </citation>
    <scope>FUNCTION</scope>
    <scope>SUBCELLULAR LOCATION</scope>
    <scope>TISSUE SPECIFICITY</scope>
</reference>
<reference key="6">
    <citation type="journal article" date="2010" name="Cell">
        <title>A tissue-specific atlas of mouse protein phosphorylation and expression.</title>
        <authorList>
            <person name="Huttlin E.L."/>
            <person name="Jedrychowski M.P."/>
            <person name="Elias J.E."/>
            <person name="Goswami T."/>
            <person name="Rad R."/>
            <person name="Beausoleil S.A."/>
            <person name="Villen J."/>
            <person name="Haas W."/>
            <person name="Sowa M.E."/>
            <person name="Gygi S.P."/>
        </authorList>
    </citation>
    <scope>IDENTIFICATION BY MASS SPECTROMETRY [LARGE SCALE ANALYSIS]</scope>
    <source>
        <tissue>Brown adipose tissue</tissue>
        <tissue>Liver</tissue>
        <tissue>Lung</tissue>
        <tissue>Spleen</tissue>
    </source>
</reference>
<feature type="chain" id="PRO_0000064510" description="Alpha-hemoglobin-stabilizing protein">
    <location>
        <begin position="1"/>
        <end position="102"/>
    </location>
</feature>
<sequence length="102" mass="11832">MAPFQSNKDLISTGIKEFNVLLDQQVFDDPLISEEDMVIVVHDWVNLYTNYYKKLVHGEQEEQDRAMTEFQQELSTLGSQFLAKYRTFLKSKEPPSNTLPSS</sequence>
<evidence type="ECO:0000269" key="1">
    <source>
    </source>
</evidence>
<evidence type="ECO:0000269" key="2">
    <source>
    </source>
</evidence>
<evidence type="ECO:0000305" key="3"/>
<dbReference type="EMBL" id="AF364516">
    <property type="protein sequence ID" value="AAK50855.1"/>
    <property type="molecule type" value="mRNA"/>
</dbReference>
<dbReference type="EMBL" id="AF060220">
    <property type="protein sequence ID" value="AAC15075.1"/>
    <property type="molecule type" value="mRNA"/>
</dbReference>
<dbReference type="EMBL" id="AF485327">
    <property type="protein sequence ID" value="AAO49383.1"/>
    <property type="molecule type" value="Genomic_DNA"/>
</dbReference>
<dbReference type="EMBL" id="AK011084">
    <property type="protein sequence ID" value="BAB27388.1"/>
    <property type="molecule type" value="mRNA"/>
</dbReference>
<dbReference type="EMBL" id="AK028172">
    <property type="protein sequence ID" value="BAC25789.1"/>
    <property type="molecule type" value="mRNA"/>
</dbReference>
<dbReference type="RefSeq" id="NP_573508.1">
    <property type="nucleotide sequence ID" value="NM_133245.2"/>
</dbReference>
<dbReference type="SMR" id="Q9CY02"/>
<dbReference type="FunCoup" id="Q9CY02">
    <property type="interactions" value="229"/>
</dbReference>
<dbReference type="iPTMnet" id="Q9CY02"/>
<dbReference type="PhosphoSitePlus" id="Q9CY02"/>
<dbReference type="CPTAC" id="non-CPTAC-3760"/>
<dbReference type="jPOST" id="Q9CY02"/>
<dbReference type="ProteomicsDB" id="281821"/>
<dbReference type="DNASU" id="170812"/>
<dbReference type="Ensembl" id="ENSMUST00000249663.1">
    <property type="protein sequence ID" value="ENSMUSP00000159842.1"/>
    <property type="gene ID" value="ENSMUSG00000121605.1"/>
</dbReference>
<dbReference type="Ensembl" id="ENSMUST00000249664.1">
    <property type="protein sequence ID" value="ENSMUSP00000159843.1"/>
    <property type="gene ID" value="ENSMUSG00000121605.1"/>
</dbReference>
<dbReference type="GeneID" id="170812"/>
<dbReference type="KEGG" id="mmu:170812"/>
<dbReference type="AGR" id="MGI:2158492"/>
<dbReference type="CTD" id="51327"/>
<dbReference type="MGI" id="MGI:2158492">
    <property type="gene designation" value="Ahsp"/>
</dbReference>
<dbReference type="GeneTree" id="ENSGT00390000003648"/>
<dbReference type="InParanoid" id="Q9CY02"/>
<dbReference type="OrthoDB" id="9827643at2759"/>
<dbReference type="PhylomeDB" id="Q9CY02"/>
<dbReference type="PRO" id="PR:Q9CY02"/>
<dbReference type="Proteomes" id="UP000000589">
    <property type="component" value="Chromosome 7"/>
</dbReference>
<dbReference type="RNAct" id="Q9CY02">
    <property type="molecule type" value="protein"/>
</dbReference>
<dbReference type="GO" id="GO:0005737">
    <property type="term" value="C:cytoplasm"/>
    <property type="evidence" value="ECO:0000314"/>
    <property type="project" value="MGI"/>
</dbReference>
<dbReference type="GO" id="GO:0030492">
    <property type="term" value="F:hemoglobin binding"/>
    <property type="evidence" value="ECO:0007669"/>
    <property type="project" value="InterPro"/>
</dbReference>
<dbReference type="GO" id="GO:0030218">
    <property type="term" value="P:erythrocyte differentiation"/>
    <property type="evidence" value="ECO:0000315"/>
    <property type="project" value="MGI"/>
</dbReference>
<dbReference type="GO" id="GO:0006457">
    <property type="term" value="P:protein folding"/>
    <property type="evidence" value="ECO:0000314"/>
    <property type="project" value="MGI"/>
</dbReference>
<dbReference type="GO" id="GO:0050821">
    <property type="term" value="P:protein stabilization"/>
    <property type="evidence" value="ECO:0000314"/>
    <property type="project" value="MGI"/>
</dbReference>
<dbReference type="FunFam" id="1.20.58.420:FF:000002">
    <property type="entry name" value="Alpha-hemoglobin-stabilizing protein"/>
    <property type="match status" value="1"/>
</dbReference>
<dbReference type="Gene3D" id="1.20.58.420">
    <property type="entry name" value="AHSP"/>
    <property type="match status" value="1"/>
</dbReference>
<dbReference type="InterPro" id="IPR015317">
    <property type="entry name" value="A_Hb_stabilising_prot"/>
</dbReference>
<dbReference type="InterPro" id="IPR036468">
    <property type="entry name" value="AHSP_sf"/>
</dbReference>
<dbReference type="PANTHER" id="PTHR15914">
    <property type="entry name" value="ALPHA-HEMOGLOBIN-STABILIZING PROTEIN"/>
    <property type="match status" value="1"/>
</dbReference>
<dbReference type="PANTHER" id="PTHR15914:SF0">
    <property type="entry name" value="ALPHA-HEMOGLOBIN-STABILIZING PROTEIN"/>
    <property type="match status" value="1"/>
</dbReference>
<dbReference type="Pfam" id="PF09236">
    <property type="entry name" value="AHSP"/>
    <property type="match status" value="1"/>
</dbReference>
<dbReference type="SUPFAM" id="SSF109751">
    <property type="entry name" value="Alpha-hemoglobin stabilizing protein AHSP"/>
    <property type="match status" value="1"/>
</dbReference>
<comment type="function">
    <text evidence="2">Acts as a chaperone to prevent the harmful aggregation of alpha-hemoglobin during normal erythroid cell development. Specifically protects free alpha-hemoglobin from precipitation.</text>
</comment>
<comment type="subunit">
    <text>Monomer. Forms a heterodimer with free alpha-hemoglobin. Does not bind beta-hemoglobin nor alpha(2)beta(2) hemoglobin A.</text>
</comment>
<comment type="subcellular location">
    <subcellularLocation>
        <location evidence="2">Cytoplasm</location>
    </subcellularLocation>
</comment>
<comment type="tissue specificity">
    <text evidence="1 2">Expressed in spleen, bone marrow, and blood, with highest levels in bone marrow.</text>
</comment>
<comment type="induction">
    <text>By GATA-1 during erythroid maturation.</text>
</comment>
<comment type="similarity">
    <text evidence="3">Belongs to the AHSP family.</text>
</comment>
<proteinExistence type="evidence at protein level"/>
<keyword id="KW-0143">Chaperone</keyword>
<keyword id="KW-0963">Cytoplasm</keyword>
<keyword id="KW-1185">Reference proteome</keyword>
<name>AHSP_MOUSE</name>
<accession>Q9CY02</accession>
<accession>O70427</accession>
<organism>
    <name type="scientific">Mus musculus</name>
    <name type="common">Mouse</name>
    <dbReference type="NCBI Taxonomy" id="10090"/>
    <lineage>
        <taxon>Eukaryota</taxon>
        <taxon>Metazoa</taxon>
        <taxon>Chordata</taxon>
        <taxon>Craniata</taxon>
        <taxon>Vertebrata</taxon>
        <taxon>Euteleostomi</taxon>
        <taxon>Mammalia</taxon>
        <taxon>Eutheria</taxon>
        <taxon>Euarchontoglires</taxon>
        <taxon>Glires</taxon>
        <taxon>Rodentia</taxon>
        <taxon>Myomorpha</taxon>
        <taxon>Muroidea</taxon>
        <taxon>Muridae</taxon>
        <taxon>Murinae</taxon>
        <taxon>Mus</taxon>
        <taxon>Mus</taxon>
    </lineage>
</organism>